<sequence>MKKWLETLPPEWKKFRYRGYTLEELLAMPMDQFIKLLPARQRRSLLRGLTDAQRRLLWKIRKARQKMLQGKKVVVKTHVRDMIILPEMVGLTIAVYNGKEFIPVKITPEMIGHYLGEFSPTCKQVQHGEPGLKATRSTLHVALK</sequence>
<proteinExistence type="inferred from homology"/>
<name>RS19_HYPBU</name>
<keyword id="KW-1185">Reference proteome</keyword>
<keyword id="KW-0687">Ribonucleoprotein</keyword>
<keyword id="KW-0689">Ribosomal protein</keyword>
<keyword id="KW-0694">RNA-binding</keyword>
<keyword id="KW-0699">rRNA-binding</keyword>
<comment type="function">
    <text evidence="1">Protein S19 forms a complex with S13 that binds strongly to the 16S ribosomal RNA.</text>
</comment>
<comment type="similarity">
    <text evidence="1">Belongs to the universal ribosomal protein uS19 family.</text>
</comment>
<comment type="sequence caution" evidence="2">
    <conflict type="erroneous initiation">
        <sequence resource="EMBL-CDS" id="ABM81124"/>
    </conflict>
</comment>
<gene>
    <name evidence="1" type="primary">rps19</name>
    <name type="ordered locus">Hbut_1294</name>
</gene>
<accession>A2BMB3</accession>
<dbReference type="EMBL" id="CP000493">
    <property type="protein sequence ID" value="ABM81124.1"/>
    <property type="status" value="ALT_INIT"/>
    <property type="molecule type" value="Genomic_DNA"/>
</dbReference>
<dbReference type="RefSeq" id="WP_048061854.1">
    <property type="nucleotide sequence ID" value="NC_008818.1"/>
</dbReference>
<dbReference type="SMR" id="A2BMB3"/>
<dbReference type="STRING" id="415426.Hbut_1294"/>
<dbReference type="EnsemblBacteria" id="ABM81124">
    <property type="protein sequence ID" value="ABM81124"/>
    <property type="gene ID" value="Hbut_1294"/>
</dbReference>
<dbReference type="GeneID" id="4781513"/>
<dbReference type="KEGG" id="hbu:Hbut_1294"/>
<dbReference type="eggNOG" id="arCOG04099">
    <property type="taxonomic scope" value="Archaea"/>
</dbReference>
<dbReference type="HOGENOM" id="CLU_097347_1_0_2"/>
<dbReference type="OrthoDB" id="30559at2157"/>
<dbReference type="Proteomes" id="UP000002593">
    <property type="component" value="Chromosome"/>
</dbReference>
<dbReference type="GO" id="GO:0022627">
    <property type="term" value="C:cytosolic small ribosomal subunit"/>
    <property type="evidence" value="ECO:0007669"/>
    <property type="project" value="TreeGrafter"/>
</dbReference>
<dbReference type="GO" id="GO:0019843">
    <property type="term" value="F:rRNA binding"/>
    <property type="evidence" value="ECO:0007669"/>
    <property type="project" value="UniProtKB-UniRule"/>
</dbReference>
<dbReference type="GO" id="GO:0003735">
    <property type="term" value="F:structural constituent of ribosome"/>
    <property type="evidence" value="ECO:0007669"/>
    <property type="project" value="InterPro"/>
</dbReference>
<dbReference type="GO" id="GO:0000028">
    <property type="term" value="P:ribosomal small subunit assembly"/>
    <property type="evidence" value="ECO:0007669"/>
    <property type="project" value="TreeGrafter"/>
</dbReference>
<dbReference type="GO" id="GO:0006412">
    <property type="term" value="P:translation"/>
    <property type="evidence" value="ECO:0007669"/>
    <property type="project" value="UniProtKB-UniRule"/>
</dbReference>
<dbReference type="FunFam" id="3.30.860.10:FF:000002">
    <property type="entry name" value="40S ribosomal protein S15"/>
    <property type="match status" value="1"/>
</dbReference>
<dbReference type="Gene3D" id="3.30.860.10">
    <property type="entry name" value="30s Ribosomal Protein S19, Chain A"/>
    <property type="match status" value="1"/>
</dbReference>
<dbReference type="HAMAP" id="MF_00531">
    <property type="entry name" value="Ribosomal_uS19"/>
    <property type="match status" value="1"/>
</dbReference>
<dbReference type="InterPro" id="IPR002222">
    <property type="entry name" value="Ribosomal_uS19"/>
</dbReference>
<dbReference type="InterPro" id="IPR020934">
    <property type="entry name" value="Ribosomal_uS19_CS"/>
</dbReference>
<dbReference type="InterPro" id="IPR005713">
    <property type="entry name" value="Ribosomal_uS19_euk/arc"/>
</dbReference>
<dbReference type="InterPro" id="IPR023575">
    <property type="entry name" value="Ribosomal_uS19_SF"/>
</dbReference>
<dbReference type="NCBIfam" id="NF003121">
    <property type="entry name" value="PRK04038.1"/>
    <property type="match status" value="1"/>
</dbReference>
<dbReference type="NCBIfam" id="TIGR01025">
    <property type="entry name" value="uS19_arch"/>
    <property type="match status" value="1"/>
</dbReference>
<dbReference type="PANTHER" id="PTHR11880">
    <property type="entry name" value="RIBOSOMAL PROTEIN S19P FAMILY MEMBER"/>
    <property type="match status" value="1"/>
</dbReference>
<dbReference type="PANTHER" id="PTHR11880:SF2">
    <property type="entry name" value="SMALL RIBOSOMAL SUBUNIT PROTEIN US19"/>
    <property type="match status" value="1"/>
</dbReference>
<dbReference type="Pfam" id="PF00203">
    <property type="entry name" value="Ribosomal_S19"/>
    <property type="match status" value="1"/>
</dbReference>
<dbReference type="PIRSF" id="PIRSF002144">
    <property type="entry name" value="Ribosomal_S19"/>
    <property type="match status" value="1"/>
</dbReference>
<dbReference type="PRINTS" id="PR00975">
    <property type="entry name" value="RIBOSOMALS19"/>
</dbReference>
<dbReference type="SUPFAM" id="SSF54570">
    <property type="entry name" value="Ribosomal protein S19"/>
    <property type="match status" value="1"/>
</dbReference>
<dbReference type="PROSITE" id="PS00323">
    <property type="entry name" value="RIBOSOMAL_S19"/>
    <property type="match status" value="1"/>
</dbReference>
<protein>
    <recommendedName>
        <fullName evidence="1">Small ribosomal subunit protein uS19</fullName>
    </recommendedName>
    <alternativeName>
        <fullName evidence="2">30S ribosomal protein S19</fullName>
    </alternativeName>
</protein>
<feature type="chain" id="PRO_0000354310" description="Small ribosomal subunit protein uS19">
    <location>
        <begin position="1"/>
        <end position="144"/>
    </location>
</feature>
<evidence type="ECO:0000255" key="1">
    <source>
        <dbReference type="HAMAP-Rule" id="MF_00531"/>
    </source>
</evidence>
<evidence type="ECO:0000305" key="2"/>
<reference key="1">
    <citation type="journal article" date="2007" name="Archaea">
        <title>The genome of Hyperthermus butylicus: a sulfur-reducing, peptide fermenting, neutrophilic Crenarchaeote growing up to 108 degrees C.</title>
        <authorList>
            <person name="Bruegger K."/>
            <person name="Chen L."/>
            <person name="Stark M."/>
            <person name="Zibat A."/>
            <person name="Redder P."/>
            <person name="Ruepp A."/>
            <person name="Awayez M."/>
            <person name="She Q."/>
            <person name="Garrett R.A."/>
            <person name="Klenk H.-P."/>
        </authorList>
    </citation>
    <scope>NUCLEOTIDE SEQUENCE [LARGE SCALE GENOMIC DNA]</scope>
    <source>
        <strain>DSM 5456 / JCM 9403 / PLM1-5</strain>
    </source>
</reference>
<organism>
    <name type="scientific">Hyperthermus butylicus (strain DSM 5456 / JCM 9403 / PLM1-5)</name>
    <dbReference type="NCBI Taxonomy" id="415426"/>
    <lineage>
        <taxon>Archaea</taxon>
        <taxon>Thermoproteota</taxon>
        <taxon>Thermoprotei</taxon>
        <taxon>Desulfurococcales</taxon>
        <taxon>Pyrodictiaceae</taxon>
        <taxon>Hyperthermus</taxon>
    </lineage>
</organism>